<accession>Q0VL94</accession>
<comment type="function">
    <text evidence="1">Catalyzes the reversible conversion of ribose-5-phosphate to ribulose 5-phosphate.</text>
</comment>
<comment type="catalytic activity">
    <reaction evidence="1">
        <text>aldehydo-D-ribose 5-phosphate = D-ribulose 5-phosphate</text>
        <dbReference type="Rhea" id="RHEA:14657"/>
        <dbReference type="ChEBI" id="CHEBI:58121"/>
        <dbReference type="ChEBI" id="CHEBI:58273"/>
        <dbReference type="EC" id="5.3.1.6"/>
    </reaction>
</comment>
<comment type="pathway">
    <text evidence="1">Carbohydrate degradation; pentose phosphate pathway; D-ribose 5-phosphate from D-ribulose 5-phosphate (non-oxidative stage): step 1/1.</text>
</comment>
<comment type="subunit">
    <text evidence="1">Homodimer.</text>
</comment>
<comment type="similarity">
    <text evidence="1">Belongs to the ribose 5-phosphate isomerase family.</text>
</comment>
<dbReference type="EC" id="5.3.1.6" evidence="1"/>
<dbReference type="EMBL" id="AM286690">
    <property type="protein sequence ID" value="CAL18054.1"/>
    <property type="molecule type" value="Genomic_DNA"/>
</dbReference>
<dbReference type="RefSeq" id="WP_011589877.1">
    <property type="nucleotide sequence ID" value="NC_008260.1"/>
</dbReference>
<dbReference type="SMR" id="Q0VL94"/>
<dbReference type="STRING" id="393595.ABO_2606"/>
<dbReference type="KEGG" id="abo:ABO_2606"/>
<dbReference type="eggNOG" id="COG0120">
    <property type="taxonomic scope" value="Bacteria"/>
</dbReference>
<dbReference type="HOGENOM" id="CLU_056590_1_1_6"/>
<dbReference type="OrthoDB" id="5870696at2"/>
<dbReference type="UniPathway" id="UPA00115">
    <property type="reaction ID" value="UER00412"/>
</dbReference>
<dbReference type="Proteomes" id="UP000008871">
    <property type="component" value="Chromosome"/>
</dbReference>
<dbReference type="GO" id="GO:0005829">
    <property type="term" value="C:cytosol"/>
    <property type="evidence" value="ECO:0007669"/>
    <property type="project" value="TreeGrafter"/>
</dbReference>
<dbReference type="GO" id="GO:0004751">
    <property type="term" value="F:ribose-5-phosphate isomerase activity"/>
    <property type="evidence" value="ECO:0007669"/>
    <property type="project" value="UniProtKB-UniRule"/>
</dbReference>
<dbReference type="GO" id="GO:0006014">
    <property type="term" value="P:D-ribose metabolic process"/>
    <property type="evidence" value="ECO:0007669"/>
    <property type="project" value="TreeGrafter"/>
</dbReference>
<dbReference type="GO" id="GO:0009052">
    <property type="term" value="P:pentose-phosphate shunt, non-oxidative branch"/>
    <property type="evidence" value="ECO:0007669"/>
    <property type="project" value="UniProtKB-UniRule"/>
</dbReference>
<dbReference type="CDD" id="cd01398">
    <property type="entry name" value="RPI_A"/>
    <property type="match status" value="1"/>
</dbReference>
<dbReference type="FunFam" id="3.30.70.260:FF:000004">
    <property type="entry name" value="Ribose-5-phosphate isomerase A"/>
    <property type="match status" value="1"/>
</dbReference>
<dbReference type="FunFam" id="3.40.50.1360:FF:000001">
    <property type="entry name" value="Ribose-5-phosphate isomerase A"/>
    <property type="match status" value="1"/>
</dbReference>
<dbReference type="Gene3D" id="3.30.70.260">
    <property type="match status" value="1"/>
</dbReference>
<dbReference type="Gene3D" id="3.40.50.1360">
    <property type="match status" value="1"/>
</dbReference>
<dbReference type="HAMAP" id="MF_00170">
    <property type="entry name" value="Rib_5P_isom_A"/>
    <property type="match status" value="1"/>
</dbReference>
<dbReference type="InterPro" id="IPR037171">
    <property type="entry name" value="NagB/RpiA_transferase-like"/>
</dbReference>
<dbReference type="InterPro" id="IPR020672">
    <property type="entry name" value="Ribose5P_isomerase_typA_subgr"/>
</dbReference>
<dbReference type="InterPro" id="IPR004788">
    <property type="entry name" value="Ribose5P_isomerase_type_A"/>
</dbReference>
<dbReference type="NCBIfam" id="NF001924">
    <property type="entry name" value="PRK00702.1"/>
    <property type="match status" value="1"/>
</dbReference>
<dbReference type="NCBIfam" id="TIGR00021">
    <property type="entry name" value="rpiA"/>
    <property type="match status" value="1"/>
</dbReference>
<dbReference type="PANTHER" id="PTHR11934">
    <property type="entry name" value="RIBOSE-5-PHOSPHATE ISOMERASE"/>
    <property type="match status" value="1"/>
</dbReference>
<dbReference type="PANTHER" id="PTHR11934:SF0">
    <property type="entry name" value="RIBOSE-5-PHOSPHATE ISOMERASE"/>
    <property type="match status" value="1"/>
</dbReference>
<dbReference type="Pfam" id="PF06026">
    <property type="entry name" value="Rib_5-P_isom_A"/>
    <property type="match status" value="1"/>
</dbReference>
<dbReference type="SUPFAM" id="SSF75445">
    <property type="entry name" value="D-ribose-5-phosphate isomerase (RpiA), lid domain"/>
    <property type="match status" value="1"/>
</dbReference>
<dbReference type="SUPFAM" id="SSF100950">
    <property type="entry name" value="NagB/RpiA/CoA transferase-like"/>
    <property type="match status" value="1"/>
</dbReference>
<organism>
    <name type="scientific">Alcanivorax borkumensis (strain ATCC 700651 / DSM 11573 / NCIMB 13689 / SK2)</name>
    <dbReference type="NCBI Taxonomy" id="393595"/>
    <lineage>
        <taxon>Bacteria</taxon>
        <taxon>Pseudomonadati</taxon>
        <taxon>Pseudomonadota</taxon>
        <taxon>Gammaproteobacteria</taxon>
        <taxon>Oceanospirillales</taxon>
        <taxon>Alcanivoracaceae</taxon>
        <taxon>Alcanivorax</taxon>
    </lineage>
</organism>
<proteinExistence type="inferred from homology"/>
<protein>
    <recommendedName>
        <fullName evidence="1">Ribose-5-phosphate isomerase A</fullName>
        <ecNumber evidence="1">5.3.1.6</ecNumber>
    </recommendedName>
    <alternativeName>
        <fullName evidence="1">Phosphoriboisomerase A</fullName>
        <shortName evidence="1">PRI</shortName>
    </alternativeName>
</protein>
<keyword id="KW-0413">Isomerase</keyword>
<keyword id="KW-1185">Reference proteome</keyword>
<reference key="1">
    <citation type="journal article" date="2006" name="Nat. Biotechnol.">
        <title>Genome sequence of the ubiquitous hydrocarbon-degrading marine bacterium Alcanivorax borkumensis.</title>
        <authorList>
            <person name="Schneiker S."/>
            <person name="Martins dos Santos V.A.P."/>
            <person name="Bartels D."/>
            <person name="Bekel T."/>
            <person name="Brecht M."/>
            <person name="Buhrmester J."/>
            <person name="Chernikova T.N."/>
            <person name="Denaro R."/>
            <person name="Ferrer M."/>
            <person name="Gertler C."/>
            <person name="Goesmann A."/>
            <person name="Golyshina O.V."/>
            <person name="Kaminski F."/>
            <person name="Khachane A.N."/>
            <person name="Lang S."/>
            <person name="Linke B."/>
            <person name="McHardy A.C."/>
            <person name="Meyer F."/>
            <person name="Nechitaylo T."/>
            <person name="Puehler A."/>
            <person name="Regenhardt D."/>
            <person name="Rupp O."/>
            <person name="Sabirova J.S."/>
            <person name="Selbitschka W."/>
            <person name="Yakimov M.M."/>
            <person name="Timmis K.N."/>
            <person name="Vorhoelter F.-J."/>
            <person name="Weidner S."/>
            <person name="Kaiser O."/>
            <person name="Golyshin P.N."/>
        </authorList>
    </citation>
    <scope>NUCLEOTIDE SEQUENCE [LARGE SCALE GENOMIC DNA]</scope>
    <source>
        <strain>ATCC 700651 / DSM 11573 / NCIMB 13689 / SK2</strain>
    </source>
</reference>
<feature type="chain" id="PRO_1000016898" description="Ribose-5-phosphate isomerase A">
    <location>
        <begin position="1"/>
        <end position="218"/>
    </location>
</feature>
<feature type="active site" description="Proton acceptor" evidence="1">
    <location>
        <position position="103"/>
    </location>
</feature>
<feature type="binding site" evidence="1">
    <location>
        <begin position="28"/>
        <end position="31"/>
    </location>
    <ligand>
        <name>substrate</name>
    </ligand>
</feature>
<feature type="binding site" evidence="1">
    <location>
        <begin position="81"/>
        <end position="84"/>
    </location>
    <ligand>
        <name>substrate</name>
    </ligand>
</feature>
<feature type="binding site" evidence="1">
    <location>
        <begin position="94"/>
        <end position="97"/>
    </location>
    <ligand>
        <name>substrate</name>
    </ligand>
</feature>
<feature type="binding site" evidence="1">
    <location>
        <position position="121"/>
    </location>
    <ligand>
        <name>substrate</name>
    </ligand>
</feature>
<gene>
    <name evidence="1" type="primary">rpiA</name>
    <name type="ordered locus">ABO_2606</name>
</gene>
<name>RPIA_ALCBS</name>
<evidence type="ECO:0000255" key="1">
    <source>
        <dbReference type="HAMAP-Rule" id="MF_00170"/>
    </source>
</evidence>
<sequence>MDQDVLKKQVAEAALRFVPEGDIIGVGTGSTANFFIDALATLKDRIKGTVASSEATAERLKQHGIEVFSLNDVGSLSVYVDGADEVNQHREMIKGGGGALTREKIVAAMAKEFICIVDGSKQVNRLGAFPLPIEVIPMARSYVARKLVALGGQPQYREGFLTDNGNIILDVHNLDISNPIELETTLNNIVGVVTNGLFAKRPADIVLVGEKSGAVNQY</sequence>